<name>SYC_SYNJA</name>
<proteinExistence type="inferred from homology"/>
<organism>
    <name type="scientific">Synechococcus sp. (strain JA-3-3Ab)</name>
    <name type="common">Cyanobacteria bacterium Yellowstone A-Prime</name>
    <dbReference type="NCBI Taxonomy" id="321327"/>
    <lineage>
        <taxon>Bacteria</taxon>
        <taxon>Bacillati</taxon>
        <taxon>Cyanobacteriota</taxon>
        <taxon>Cyanophyceae</taxon>
        <taxon>Synechococcales</taxon>
        <taxon>Synechococcaceae</taxon>
        <taxon>Synechococcus</taxon>
    </lineage>
</organism>
<sequence length="506" mass="56823">MTLVVYNTLTRRKEVFQPFGGSESISADEAAGGEKPLVRMYVCGVTVYDLCHLGHARTYVVWDMVRRYLECRGYRVKYVQNFTDVDDKILKRALERGESMQAVAERFIAEYFQDMDRLNIKRADLYPRATRSLRAMFELIQSLELKGFAYRVRDPLAPQGETPAYDVYYAVRKFPDYGQLSGRKLEELEAGASGRVGEEGAGKRDPFDFALWKAAPPSEPGFESPWGWGRPGWHIECSAMVRETLGDHIDIHAGGADLIFPHHENELAQSEPITGKPLAKYWLHNGFVNVNGQKMSKSLGNFTTLRQALALYHPMALRLFLLQTHYRSPIDLTEAAMEAASHGWETLQKGIHCAQQFGQGGSPDSEAMRAFQTAMDDDFGTPGALALAFELAKELIREHNLLTHQGHTHLQPHLLRQKGAALLEILATLGFCWPQPAQGSEKAAANGELAKLPPLEDARIEELVAQRTAARKAKNFAEADRIREQLKALGITLIDQKDGTTRWLRQ</sequence>
<accession>Q2JTF4</accession>
<gene>
    <name evidence="1" type="primary">cysS</name>
    <name type="ordered locus">CYA_1896</name>
</gene>
<comment type="catalytic activity">
    <reaction evidence="1">
        <text>tRNA(Cys) + L-cysteine + ATP = L-cysteinyl-tRNA(Cys) + AMP + diphosphate</text>
        <dbReference type="Rhea" id="RHEA:17773"/>
        <dbReference type="Rhea" id="RHEA-COMP:9661"/>
        <dbReference type="Rhea" id="RHEA-COMP:9679"/>
        <dbReference type="ChEBI" id="CHEBI:30616"/>
        <dbReference type="ChEBI" id="CHEBI:33019"/>
        <dbReference type="ChEBI" id="CHEBI:35235"/>
        <dbReference type="ChEBI" id="CHEBI:78442"/>
        <dbReference type="ChEBI" id="CHEBI:78517"/>
        <dbReference type="ChEBI" id="CHEBI:456215"/>
        <dbReference type="EC" id="6.1.1.16"/>
    </reaction>
</comment>
<comment type="cofactor">
    <cofactor evidence="1">
        <name>Zn(2+)</name>
        <dbReference type="ChEBI" id="CHEBI:29105"/>
    </cofactor>
    <text evidence="1">Binds 1 zinc ion per subunit.</text>
</comment>
<comment type="subunit">
    <text evidence="1">Monomer.</text>
</comment>
<comment type="subcellular location">
    <subcellularLocation>
        <location evidence="1">Cytoplasm</location>
    </subcellularLocation>
</comment>
<comment type="similarity">
    <text evidence="1">Belongs to the class-I aminoacyl-tRNA synthetase family.</text>
</comment>
<protein>
    <recommendedName>
        <fullName evidence="1">Cysteine--tRNA ligase</fullName>
        <ecNumber evidence="1">6.1.1.16</ecNumber>
    </recommendedName>
    <alternativeName>
        <fullName evidence="1">Cysteinyl-tRNA synthetase</fullName>
        <shortName evidence="1">CysRS</shortName>
    </alternativeName>
</protein>
<reference key="1">
    <citation type="journal article" date="2007" name="ISME J.">
        <title>Population level functional diversity in a microbial community revealed by comparative genomic and metagenomic analyses.</title>
        <authorList>
            <person name="Bhaya D."/>
            <person name="Grossman A.R."/>
            <person name="Steunou A.-S."/>
            <person name="Khuri N."/>
            <person name="Cohan F.M."/>
            <person name="Hamamura N."/>
            <person name="Melendrez M.C."/>
            <person name="Bateson M.M."/>
            <person name="Ward D.M."/>
            <person name="Heidelberg J.F."/>
        </authorList>
    </citation>
    <scope>NUCLEOTIDE SEQUENCE [LARGE SCALE GENOMIC DNA]</scope>
    <source>
        <strain>JA-3-3Ab</strain>
    </source>
</reference>
<dbReference type="EC" id="6.1.1.16" evidence="1"/>
<dbReference type="EMBL" id="CP000239">
    <property type="protein sequence ID" value="ABD00043.1"/>
    <property type="molecule type" value="Genomic_DNA"/>
</dbReference>
<dbReference type="RefSeq" id="WP_011430718.1">
    <property type="nucleotide sequence ID" value="NC_007775.1"/>
</dbReference>
<dbReference type="SMR" id="Q2JTF4"/>
<dbReference type="STRING" id="321327.CYA_1896"/>
<dbReference type="KEGG" id="cya:CYA_1896"/>
<dbReference type="eggNOG" id="COG0215">
    <property type="taxonomic scope" value="Bacteria"/>
</dbReference>
<dbReference type="HOGENOM" id="CLU_013528_0_1_3"/>
<dbReference type="OrthoDB" id="9815130at2"/>
<dbReference type="Proteomes" id="UP000008818">
    <property type="component" value="Chromosome"/>
</dbReference>
<dbReference type="GO" id="GO:0005829">
    <property type="term" value="C:cytosol"/>
    <property type="evidence" value="ECO:0007669"/>
    <property type="project" value="TreeGrafter"/>
</dbReference>
<dbReference type="GO" id="GO:0005524">
    <property type="term" value="F:ATP binding"/>
    <property type="evidence" value="ECO:0007669"/>
    <property type="project" value="UniProtKB-UniRule"/>
</dbReference>
<dbReference type="GO" id="GO:0004817">
    <property type="term" value="F:cysteine-tRNA ligase activity"/>
    <property type="evidence" value="ECO:0007669"/>
    <property type="project" value="UniProtKB-UniRule"/>
</dbReference>
<dbReference type="GO" id="GO:0008270">
    <property type="term" value="F:zinc ion binding"/>
    <property type="evidence" value="ECO:0007669"/>
    <property type="project" value="UniProtKB-UniRule"/>
</dbReference>
<dbReference type="GO" id="GO:0006423">
    <property type="term" value="P:cysteinyl-tRNA aminoacylation"/>
    <property type="evidence" value="ECO:0007669"/>
    <property type="project" value="UniProtKB-UniRule"/>
</dbReference>
<dbReference type="CDD" id="cd00672">
    <property type="entry name" value="CysRS_core"/>
    <property type="match status" value="1"/>
</dbReference>
<dbReference type="Gene3D" id="1.20.120.1910">
    <property type="entry name" value="Cysteine-tRNA ligase, C-terminal anti-codon recognition domain"/>
    <property type="match status" value="1"/>
</dbReference>
<dbReference type="Gene3D" id="3.40.50.620">
    <property type="entry name" value="HUPs"/>
    <property type="match status" value="1"/>
</dbReference>
<dbReference type="HAMAP" id="MF_00041">
    <property type="entry name" value="Cys_tRNA_synth"/>
    <property type="match status" value="1"/>
</dbReference>
<dbReference type="InterPro" id="IPR015803">
    <property type="entry name" value="Cys-tRNA-ligase"/>
</dbReference>
<dbReference type="InterPro" id="IPR015273">
    <property type="entry name" value="Cys-tRNA-synt_Ia_DALR"/>
</dbReference>
<dbReference type="InterPro" id="IPR024909">
    <property type="entry name" value="Cys-tRNA/MSH_ligase"/>
</dbReference>
<dbReference type="InterPro" id="IPR056411">
    <property type="entry name" value="CysS_C"/>
</dbReference>
<dbReference type="InterPro" id="IPR014729">
    <property type="entry name" value="Rossmann-like_a/b/a_fold"/>
</dbReference>
<dbReference type="InterPro" id="IPR032678">
    <property type="entry name" value="tRNA-synt_1_cat_dom"/>
</dbReference>
<dbReference type="InterPro" id="IPR009080">
    <property type="entry name" value="tRNAsynth_Ia_anticodon-bd"/>
</dbReference>
<dbReference type="NCBIfam" id="TIGR00435">
    <property type="entry name" value="cysS"/>
    <property type="match status" value="1"/>
</dbReference>
<dbReference type="PANTHER" id="PTHR10890:SF3">
    <property type="entry name" value="CYSTEINE--TRNA LIGASE, CYTOPLASMIC"/>
    <property type="match status" value="1"/>
</dbReference>
<dbReference type="PANTHER" id="PTHR10890">
    <property type="entry name" value="CYSTEINYL-TRNA SYNTHETASE"/>
    <property type="match status" value="1"/>
</dbReference>
<dbReference type="Pfam" id="PF23493">
    <property type="entry name" value="CysS_C"/>
    <property type="match status" value="1"/>
</dbReference>
<dbReference type="Pfam" id="PF09190">
    <property type="entry name" value="DALR_2"/>
    <property type="match status" value="1"/>
</dbReference>
<dbReference type="Pfam" id="PF01406">
    <property type="entry name" value="tRNA-synt_1e"/>
    <property type="match status" value="1"/>
</dbReference>
<dbReference type="PRINTS" id="PR00983">
    <property type="entry name" value="TRNASYNTHCYS"/>
</dbReference>
<dbReference type="SMART" id="SM00840">
    <property type="entry name" value="DALR_2"/>
    <property type="match status" value="1"/>
</dbReference>
<dbReference type="SUPFAM" id="SSF47323">
    <property type="entry name" value="Anticodon-binding domain of a subclass of class I aminoacyl-tRNA synthetases"/>
    <property type="match status" value="1"/>
</dbReference>
<dbReference type="SUPFAM" id="SSF52374">
    <property type="entry name" value="Nucleotidylyl transferase"/>
    <property type="match status" value="1"/>
</dbReference>
<feature type="chain" id="PRO_0000240967" description="Cysteine--tRNA ligase">
    <location>
        <begin position="1"/>
        <end position="506"/>
    </location>
</feature>
<feature type="short sequence motif" description="'HIGH' region">
    <location>
        <begin position="45"/>
        <end position="55"/>
    </location>
</feature>
<feature type="short sequence motif" description="'KMSKS' region">
    <location>
        <begin position="294"/>
        <end position="298"/>
    </location>
</feature>
<feature type="binding site" evidence="1">
    <location>
        <position position="43"/>
    </location>
    <ligand>
        <name>Zn(2+)</name>
        <dbReference type="ChEBI" id="CHEBI:29105"/>
    </ligand>
</feature>
<feature type="binding site" evidence="1">
    <location>
        <position position="237"/>
    </location>
    <ligand>
        <name>Zn(2+)</name>
        <dbReference type="ChEBI" id="CHEBI:29105"/>
    </ligand>
</feature>
<feature type="binding site" evidence="1">
    <location>
        <position position="262"/>
    </location>
    <ligand>
        <name>Zn(2+)</name>
        <dbReference type="ChEBI" id="CHEBI:29105"/>
    </ligand>
</feature>
<feature type="binding site" evidence="1">
    <location>
        <position position="266"/>
    </location>
    <ligand>
        <name>Zn(2+)</name>
        <dbReference type="ChEBI" id="CHEBI:29105"/>
    </ligand>
</feature>
<feature type="binding site" evidence="1">
    <location>
        <position position="297"/>
    </location>
    <ligand>
        <name>ATP</name>
        <dbReference type="ChEBI" id="CHEBI:30616"/>
    </ligand>
</feature>
<evidence type="ECO:0000255" key="1">
    <source>
        <dbReference type="HAMAP-Rule" id="MF_00041"/>
    </source>
</evidence>
<keyword id="KW-0030">Aminoacyl-tRNA synthetase</keyword>
<keyword id="KW-0067">ATP-binding</keyword>
<keyword id="KW-0963">Cytoplasm</keyword>
<keyword id="KW-0436">Ligase</keyword>
<keyword id="KW-0479">Metal-binding</keyword>
<keyword id="KW-0547">Nucleotide-binding</keyword>
<keyword id="KW-0648">Protein biosynthesis</keyword>
<keyword id="KW-0862">Zinc</keyword>